<evidence type="ECO:0000269" key="1">
    <source>
    </source>
</evidence>
<evidence type="ECO:0000305" key="2"/>
<keyword id="KW-0143">Chaperone</keyword>
<keyword id="KW-0963">Cytoplasm</keyword>
<keyword id="KW-0843">Virulence</keyword>
<comment type="function">
    <text evidence="1">Molecular chaperone required for SptP stabilization and secretion.</text>
</comment>
<comment type="subcellular location">
    <subcellularLocation>
        <location>Cytoplasm</location>
    </subcellularLocation>
</comment>
<comment type="similarity">
    <text evidence="2">Belongs to the SicP family.</text>
</comment>
<comment type="sequence caution" evidence="2">
    <conflict type="erroneous initiation">
        <sequence resource="EMBL-CDS" id="CBW18957"/>
    </conflict>
    <text>Extended N-terminus.</text>
</comment>
<proteinExistence type="inferred from homology"/>
<organism>
    <name type="scientific">Salmonella typhimurium (strain SL1344)</name>
    <dbReference type="NCBI Taxonomy" id="216597"/>
    <lineage>
        <taxon>Bacteria</taxon>
        <taxon>Pseudomonadati</taxon>
        <taxon>Pseudomonadota</taxon>
        <taxon>Gammaproteobacteria</taxon>
        <taxon>Enterobacterales</taxon>
        <taxon>Enterobacteriaceae</taxon>
        <taxon>Salmonella</taxon>
    </lineage>
</organism>
<feature type="chain" id="PRO_0000405427" description="Chaperone protein SicP">
    <location>
        <begin position="1"/>
        <end position="116"/>
    </location>
</feature>
<dbReference type="EMBL" id="AF060857">
    <property type="protein sequence ID" value="AAC38655.1"/>
    <property type="molecule type" value="Genomic_DNA"/>
</dbReference>
<dbReference type="EMBL" id="FQ312003">
    <property type="protein sequence ID" value="CBW18957.1"/>
    <property type="status" value="ALT_INIT"/>
    <property type="molecule type" value="Genomic_DNA"/>
</dbReference>
<dbReference type="SMR" id="E1WAC4"/>
<dbReference type="KEGG" id="sey:SL1344_2859"/>
<dbReference type="PATRIC" id="fig|216597.6.peg.3180"/>
<dbReference type="HOGENOM" id="CLU_126979_0_0_6"/>
<dbReference type="Proteomes" id="UP000008962">
    <property type="component" value="Chromosome"/>
</dbReference>
<dbReference type="GO" id="GO:0005737">
    <property type="term" value="C:cytoplasm"/>
    <property type="evidence" value="ECO:0007669"/>
    <property type="project" value="UniProtKB-SubCell"/>
</dbReference>
<dbReference type="GO" id="GO:0030254">
    <property type="term" value="P:protein secretion by the type III secretion system"/>
    <property type="evidence" value="ECO:0007669"/>
    <property type="project" value="InterPro"/>
</dbReference>
<dbReference type="CDD" id="cd17021">
    <property type="entry name" value="T3SC_IA_SicP-like"/>
    <property type="match status" value="1"/>
</dbReference>
<dbReference type="Gene3D" id="3.30.1460.10">
    <property type="match status" value="1"/>
</dbReference>
<dbReference type="InterPro" id="IPR044530">
    <property type="entry name" value="SicP"/>
</dbReference>
<dbReference type="InterPro" id="IPR010261">
    <property type="entry name" value="Tir_chaperone"/>
</dbReference>
<dbReference type="NCBIfam" id="NF011857">
    <property type="entry name" value="PRK15329.1"/>
    <property type="match status" value="1"/>
</dbReference>
<dbReference type="Pfam" id="PF05932">
    <property type="entry name" value="CesT"/>
    <property type="match status" value="1"/>
</dbReference>
<dbReference type="SUPFAM" id="SSF69635">
    <property type="entry name" value="Type III secretory system chaperone-like"/>
    <property type="match status" value="1"/>
</dbReference>
<protein>
    <recommendedName>
        <fullName>Chaperone protein SicP</fullName>
    </recommendedName>
</protein>
<sequence>MGLPLTFDDNNQCLLLLDSDIFTSIEAKDDIWLLNGMIIPLSPVCGDSIWRQIMVINGELAANNEGTLAYIDAAETLLLIHAITDLTNTYHIISQLESFVNQQEALKNILQEYAKV</sequence>
<accession>E1WAC4</accession>
<accession>O85300</accession>
<accession>Q8ZMI1</accession>
<reference key="1">
    <citation type="journal article" date="1998" name="J. Bacteriol.">
        <title>Identification of a specific chaperone for SptP, a substrate of the centisome 63 type III secretion system of Salmonella typhimurium.</title>
        <authorList>
            <person name="Fu Y."/>
            <person name="Galan J.E."/>
        </authorList>
    </citation>
    <scope>NUCLEOTIDE SEQUENCE [GENOMIC DNA]</scope>
    <scope>FUNCTION</scope>
    <source>
        <strain>SL1344</strain>
    </source>
</reference>
<reference key="2">
    <citation type="journal article" date="2012" name="Proc. Natl. Acad. Sci. U.S.A.">
        <title>The transcriptional landscape and small RNAs of Salmonella enterica serovar Typhimurium.</title>
        <authorList>
            <person name="Kroger C."/>
            <person name="Dillon S.C."/>
            <person name="Cameron A.D."/>
            <person name="Papenfort K."/>
            <person name="Sivasankaran S.K."/>
            <person name="Hokamp K."/>
            <person name="Chao Y."/>
            <person name="Sittka A."/>
            <person name="Hebrard M."/>
            <person name="Handler K."/>
            <person name="Colgan A."/>
            <person name="Leekitcharoenphon P."/>
            <person name="Langridge G.C."/>
            <person name="Lohan A.J."/>
            <person name="Loftus B."/>
            <person name="Lucchini S."/>
            <person name="Ussery D.W."/>
            <person name="Dorman C.J."/>
            <person name="Thomson N.R."/>
            <person name="Vogel J."/>
            <person name="Hinton J.C."/>
        </authorList>
    </citation>
    <scope>NUCLEOTIDE SEQUENCE [LARGE SCALE GENOMIC DNA]</scope>
    <source>
        <strain>SL1344</strain>
    </source>
</reference>
<name>SICP_SALTS</name>
<gene>
    <name type="primary">sicP</name>
    <name type="ordered locus">SL1344_2859</name>
</gene>